<reference key="1">
    <citation type="journal article" date="2008" name="PLoS Genet.">
        <title>Complete genome sequence of the complex carbohydrate-degrading marine bacterium, Saccharophagus degradans strain 2-40 T.</title>
        <authorList>
            <person name="Weiner R.M."/>
            <person name="Taylor L.E. II"/>
            <person name="Henrissat B."/>
            <person name="Hauser L."/>
            <person name="Land M."/>
            <person name="Coutinho P.M."/>
            <person name="Rancurel C."/>
            <person name="Saunders E.H."/>
            <person name="Longmire A.G."/>
            <person name="Zhang H."/>
            <person name="Bayer E.A."/>
            <person name="Gilbert H.J."/>
            <person name="Larimer F."/>
            <person name="Zhulin I.B."/>
            <person name="Ekborg N.A."/>
            <person name="Lamed R."/>
            <person name="Richardson P.M."/>
            <person name="Borovok I."/>
            <person name="Hutcheson S."/>
        </authorList>
    </citation>
    <scope>NUCLEOTIDE SEQUENCE [LARGE SCALE GENOMIC DNA]</scope>
    <source>
        <strain>2-40 / ATCC 43961 / DSM 17024</strain>
    </source>
</reference>
<protein>
    <recommendedName>
        <fullName evidence="1">Na(+)-translocating NADH-quinone reductase subunit A</fullName>
        <shortName evidence="1">Na(+)-NQR subunit A</shortName>
        <shortName evidence="1">Na(+)-translocating NQR subunit A</shortName>
        <ecNumber evidence="1">7.2.1.1</ecNumber>
    </recommendedName>
    <alternativeName>
        <fullName evidence="1">NQR complex subunit A</fullName>
    </alternativeName>
    <alternativeName>
        <fullName evidence="1">NQR-1 subunit A</fullName>
    </alternativeName>
</protein>
<sequence length="447" mass="48052">MIKIRRGLDLPITGSPRQSIEDGPAIRSVALIGFDYHGMKPTMNVQVGDKVKLGQVLFTDKKTVGVKYTSPAAGTVSAINRGERRVLQSVVIDIEGDEAESFKTFSEAEIASADRQALVDNLVDSGLWTALRTRPYSKVPQLDSVPNSIFVTAMDTNPLAADPQLVIGEKSAAFALGLAVLAKLTEGKVFVCHADGASVPTSAAANVEAKAFSGVHPAGNAGTHIHFLDPVSANKTVWTIGYQDVIAYGELFTSGKLPVDRVVSLAGPQVTDPRVVRTRLGASLQELTAGQLKDGENRIISGSVFSGRKTSSPTAYLGRFHNQVSVLLEGRDRPFLHYLVAGANRFSVMPIYLSKLFGGKKFDFTTSTLGSERAMVPVGAYEKVMPLDILPTQLLRSIIVGDTEAAQQLGCLELDEEDLALCSFVCPGKYEYGPILRDNLTRIEKEG</sequence>
<name>NQRA_SACD2</name>
<accession>Q21JS2</accession>
<organism>
    <name type="scientific">Saccharophagus degradans (strain 2-40 / ATCC 43961 / DSM 17024)</name>
    <dbReference type="NCBI Taxonomy" id="203122"/>
    <lineage>
        <taxon>Bacteria</taxon>
        <taxon>Pseudomonadati</taxon>
        <taxon>Pseudomonadota</taxon>
        <taxon>Gammaproteobacteria</taxon>
        <taxon>Cellvibrionales</taxon>
        <taxon>Cellvibrionaceae</taxon>
        <taxon>Saccharophagus</taxon>
    </lineage>
</organism>
<dbReference type="EC" id="7.2.1.1" evidence="1"/>
<dbReference type="EMBL" id="CP000282">
    <property type="protein sequence ID" value="ABD81057.1"/>
    <property type="molecule type" value="Genomic_DNA"/>
</dbReference>
<dbReference type="RefSeq" id="WP_011468277.1">
    <property type="nucleotide sequence ID" value="NC_007912.1"/>
</dbReference>
<dbReference type="SMR" id="Q21JS2"/>
<dbReference type="STRING" id="203122.Sde_1797"/>
<dbReference type="GeneID" id="98613469"/>
<dbReference type="KEGG" id="sde:Sde_1797"/>
<dbReference type="eggNOG" id="COG1726">
    <property type="taxonomic scope" value="Bacteria"/>
</dbReference>
<dbReference type="HOGENOM" id="CLU_046656_0_0_6"/>
<dbReference type="OrthoDB" id="9774536at2"/>
<dbReference type="Proteomes" id="UP000001947">
    <property type="component" value="Chromosome"/>
</dbReference>
<dbReference type="GO" id="GO:0016655">
    <property type="term" value="F:oxidoreductase activity, acting on NAD(P)H, quinone or similar compound as acceptor"/>
    <property type="evidence" value="ECO:0007669"/>
    <property type="project" value="UniProtKB-UniRule"/>
</dbReference>
<dbReference type="GO" id="GO:0006814">
    <property type="term" value="P:sodium ion transport"/>
    <property type="evidence" value="ECO:0007669"/>
    <property type="project" value="UniProtKB-UniRule"/>
</dbReference>
<dbReference type="HAMAP" id="MF_00425">
    <property type="entry name" value="NqrA"/>
    <property type="match status" value="1"/>
</dbReference>
<dbReference type="InterPro" id="IPR008703">
    <property type="entry name" value="NqrA"/>
</dbReference>
<dbReference type="InterPro" id="IPR056148">
    <property type="entry name" value="NQRA_2nd"/>
</dbReference>
<dbReference type="InterPro" id="IPR022615">
    <property type="entry name" value="NqrA_C_domain"/>
</dbReference>
<dbReference type="InterPro" id="IPR056147">
    <property type="entry name" value="NQRA_N"/>
</dbReference>
<dbReference type="NCBIfam" id="TIGR01936">
    <property type="entry name" value="nqrA"/>
    <property type="match status" value="1"/>
</dbReference>
<dbReference type="NCBIfam" id="NF003759">
    <property type="entry name" value="PRK05352.1-2"/>
    <property type="match status" value="1"/>
</dbReference>
<dbReference type="PANTHER" id="PTHR37839">
    <property type="entry name" value="NA(+)-TRANSLOCATING NADH-QUINONE REDUCTASE SUBUNIT A"/>
    <property type="match status" value="1"/>
</dbReference>
<dbReference type="PANTHER" id="PTHR37839:SF1">
    <property type="entry name" value="NA(+)-TRANSLOCATING NADH-QUINONE REDUCTASE SUBUNIT A"/>
    <property type="match status" value="1"/>
</dbReference>
<dbReference type="Pfam" id="PF24836">
    <property type="entry name" value="NQRA_2nd"/>
    <property type="match status" value="1"/>
</dbReference>
<dbReference type="Pfam" id="PF05896">
    <property type="entry name" value="NQRA_N"/>
    <property type="match status" value="1"/>
</dbReference>
<dbReference type="Pfam" id="PF11973">
    <property type="entry name" value="NQRA_SLBB"/>
    <property type="match status" value="1"/>
</dbReference>
<gene>
    <name evidence="1" type="primary">nqrA</name>
    <name type="ordered locus">Sde_1797</name>
</gene>
<feature type="chain" id="PRO_1000060126" description="Na(+)-translocating NADH-quinone reductase subunit A">
    <location>
        <begin position="1"/>
        <end position="447"/>
    </location>
</feature>
<proteinExistence type="inferred from homology"/>
<evidence type="ECO:0000255" key="1">
    <source>
        <dbReference type="HAMAP-Rule" id="MF_00425"/>
    </source>
</evidence>
<comment type="function">
    <text evidence="1">NQR complex catalyzes the reduction of ubiquinone-1 to ubiquinol by two successive reactions, coupled with the transport of Na(+) ions from the cytoplasm to the periplasm. NqrA to NqrE are probably involved in the second step, the conversion of ubisemiquinone to ubiquinol.</text>
</comment>
<comment type="catalytic activity">
    <reaction evidence="1">
        <text>a ubiquinone + n Na(+)(in) + NADH + H(+) = a ubiquinol + n Na(+)(out) + NAD(+)</text>
        <dbReference type="Rhea" id="RHEA:47748"/>
        <dbReference type="Rhea" id="RHEA-COMP:9565"/>
        <dbReference type="Rhea" id="RHEA-COMP:9566"/>
        <dbReference type="ChEBI" id="CHEBI:15378"/>
        <dbReference type="ChEBI" id="CHEBI:16389"/>
        <dbReference type="ChEBI" id="CHEBI:17976"/>
        <dbReference type="ChEBI" id="CHEBI:29101"/>
        <dbReference type="ChEBI" id="CHEBI:57540"/>
        <dbReference type="ChEBI" id="CHEBI:57945"/>
        <dbReference type="EC" id="7.2.1.1"/>
    </reaction>
</comment>
<comment type="subunit">
    <text evidence="1">Composed of six subunits; NqrA, NqrB, NqrC, NqrD, NqrE and NqrF.</text>
</comment>
<comment type="similarity">
    <text evidence="1">Belongs to the NqrA family.</text>
</comment>
<keyword id="KW-0406">Ion transport</keyword>
<keyword id="KW-0520">NAD</keyword>
<keyword id="KW-1185">Reference proteome</keyword>
<keyword id="KW-0915">Sodium</keyword>
<keyword id="KW-0739">Sodium transport</keyword>
<keyword id="KW-1278">Translocase</keyword>
<keyword id="KW-0813">Transport</keyword>
<keyword id="KW-0830">Ubiquinone</keyword>